<proteinExistence type="inferred from homology"/>
<feature type="chain" id="PRO_0000324073" description="Light-independent protochlorophyllide reductase iron-sulfur ATP-binding protein">
    <location>
        <begin position="1"/>
        <end position="295"/>
    </location>
</feature>
<feature type="binding site" evidence="1">
    <location>
        <begin position="39"/>
        <end position="44"/>
    </location>
    <ligand>
        <name>ATP</name>
        <dbReference type="ChEBI" id="CHEBI:30616"/>
    </ligand>
</feature>
<feature type="binding site" evidence="1">
    <location>
        <position position="43"/>
    </location>
    <ligand>
        <name>Mg(2+)</name>
        <dbReference type="ChEBI" id="CHEBI:18420"/>
    </ligand>
</feature>
<feature type="binding site" evidence="1">
    <location>
        <position position="68"/>
    </location>
    <ligand>
        <name>ATP</name>
        <dbReference type="ChEBI" id="CHEBI:30616"/>
    </ligand>
</feature>
<feature type="binding site" evidence="1">
    <location>
        <position position="124"/>
    </location>
    <ligand>
        <name>[4Fe-4S] cluster</name>
        <dbReference type="ChEBI" id="CHEBI:49883"/>
        <note>ligand shared between dimeric partners</note>
    </ligand>
</feature>
<feature type="binding site" evidence="1">
    <location>
        <position position="158"/>
    </location>
    <ligand>
        <name>[4Fe-4S] cluster</name>
        <dbReference type="ChEBI" id="CHEBI:49883"/>
        <note>ligand shared between dimeric partners</note>
    </ligand>
</feature>
<feature type="binding site" evidence="1">
    <location>
        <begin position="209"/>
        <end position="210"/>
    </location>
    <ligand>
        <name>ATP</name>
        <dbReference type="ChEBI" id="CHEBI:30616"/>
    </ligand>
</feature>
<feature type="binding site" evidence="1">
    <location>
        <begin position="233"/>
        <end position="235"/>
    </location>
    <ligand>
        <name>ATP</name>
        <dbReference type="ChEBI" id="CHEBI:30616"/>
    </ligand>
</feature>
<organism>
    <name type="scientific">Rhodospirillum rubrum (strain ATCC 11170 / ATH 1.1.1 / DSM 467 / LMG 4362 / NCIMB 8255 / S1)</name>
    <dbReference type="NCBI Taxonomy" id="269796"/>
    <lineage>
        <taxon>Bacteria</taxon>
        <taxon>Pseudomonadati</taxon>
        <taxon>Pseudomonadota</taxon>
        <taxon>Alphaproteobacteria</taxon>
        <taxon>Rhodospirillales</taxon>
        <taxon>Rhodospirillaceae</taxon>
        <taxon>Rhodospirillum</taxon>
    </lineage>
</organism>
<sequence length="295" mass="32108">MFDETMRQPPDGEGSVQVEMDPALHIETAKVFAIYGKGGIGKSTTSSNLSAAFSKLGKRVVQIGCDPKHDSTFTLTKRLVPTVIDVLQAVHFHTEELRVEDFVYEGYNGVMCVEAGGPPAGTGCGGYVVGQTVKLLKEHHILEDADVVVFDVLGDVVCGGFATPLQHAERALVVAANDFDSIFAANRIAAAIQAKAKNYDVRLGGIIANRSVATDQIERFNARSGMRTLAHFPDLDVIRRSRLCKSTLFEMEPSPELAAVQQEYLRLAEALWEGVEPLTATPLIDREIFDLLGFD</sequence>
<keyword id="KW-0004">4Fe-4S</keyword>
<keyword id="KW-0067">ATP-binding</keyword>
<keyword id="KW-0077">Bacteriochlorophyll biosynthesis</keyword>
<keyword id="KW-0149">Chlorophyll biosynthesis</keyword>
<keyword id="KW-0408">Iron</keyword>
<keyword id="KW-0411">Iron-sulfur</keyword>
<keyword id="KW-0460">Magnesium</keyword>
<keyword id="KW-0479">Metal-binding</keyword>
<keyword id="KW-0547">Nucleotide-binding</keyword>
<keyword id="KW-0560">Oxidoreductase</keyword>
<keyword id="KW-0602">Photosynthesis</keyword>
<keyword id="KW-1185">Reference proteome</keyword>
<protein>
    <recommendedName>
        <fullName evidence="1">Light-independent protochlorophyllide reductase iron-sulfur ATP-binding protein</fullName>
        <shortName evidence="1">DPOR subunit L</shortName>
        <shortName evidence="1">LI-POR subunit L</shortName>
        <ecNumber evidence="1">1.3.7.7</ecNumber>
    </recommendedName>
</protein>
<name>BCHL_RHORT</name>
<gene>
    <name evidence="1" type="primary">bchL</name>
    <name type="ordered locus">Rru_A0620</name>
</gene>
<evidence type="ECO:0000255" key="1">
    <source>
        <dbReference type="HAMAP-Rule" id="MF_00355"/>
    </source>
</evidence>
<reference key="1">
    <citation type="journal article" date="2011" name="Stand. Genomic Sci.">
        <title>Complete genome sequence of Rhodospirillum rubrum type strain (S1).</title>
        <authorList>
            <person name="Munk A.C."/>
            <person name="Copeland A."/>
            <person name="Lucas S."/>
            <person name="Lapidus A."/>
            <person name="Del Rio T.G."/>
            <person name="Barry K."/>
            <person name="Detter J.C."/>
            <person name="Hammon N."/>
            <person name="Israni S."/>
            <person name="Pitluck S."/>
            <person name="Brettin T."/>
            <person name="Bruce D."/>
            <person name="Han C."/>
            <person name="Tapia R."/>
            <person name="Gilna P."/>
            <person name="Schmutz J."/>
            <person name="Larimer F."/>
            <person name="Land M."/>
            <person name="Kyrpides N.C."/>
            <person name="Mavromatis K."/>
            <person name="Richardson P."/>
            <person name="Rohde M."/>
            <person name="Goeker M."/>
            <person name="Klenk H.P."/>
            <person name="Zhang Y."/>
            <person name="Roberts G.P."/>
            <person name="Reslewic S."/>
            <person name="Schwartz D.C."/>
        </authorList>
    </citation>
    <scope>NUCLEOTIDE SEQUENCE [LARGE SCALE GENOMIC DNA]</scope>
    <source>
        <strain>ATCC 11170 / ATH 1.1.1 / DSM 467 / LMG 4362 / NCIMB 8255 / S1</strain>
    </source>
</reference>
<accession>Q2RWS1</accession>
<dbReference type="EC" id="1.3.7.7" evidence="1"/>
<dbReference type="EMBL" id="CP000230">
    <property type="protein sequence ID" value="ABC21424.1"/>
    <property type="molecule type" value="Genomic_DNA"/>
</dbReference>
<dbReference type="RefSeq" id="WP_011388378.1">
    <property type="nucleotide sequence ID" value="NC_007643.1"/>
</dbReference>
<dbReference type="RefSeq" id="YP_425711.1">
    <property type="nucleotide sequence ID" value="NC_007643.1"/>
</dbReference>
<dbReference type="SMR" id="Q2RWS1"/>
<dbReference type="STRING" id="269796.Rru_A0620"/>
<dbReference type="EnsemblBacteria" id="ABC21424">
    <property type="protein sequence ID" value="ABC21424"/>
    <property type="gene ID" value="Rru_A0620"/>
</dbReference>
<dbReference type="KEGG" id="rru:Rru_A0620"/>
<dbReference type="PATRIC" id="fig|269796.9.peg.675"/>
<dbReference type="eggNOG" id="COG1348">
    <property type="taxonomic scope" value="Bacteria"/>
</dbReference>
<dbReference type="HOGENOM" id="CLU_059373_2_0_5"/>
<dbReference type="PhylomeDB" id="Q2RWS1"/>
<dbReference type="UniPathway" id="UPA00671"/>
<dbReference type="Proteomes" id="UP000001929">
    <property type="component" value="Chromosome"/>
</dbReference>
<dbReference type="GO" id="GO:0051539">
    <property type="term" value="F:4 iron, 4 sulfur cluster binding"/>
    <property type="evidence" value="ECO:0007669"/>
    <property type="project" value="UniProtKB-UniRule"/>
</dbReference>
<dbReference type="GO" id="GO:0005524">
    <property type="term" value="F:ATP binding"/>
    <property type="evidence" value="ECO:0007669"/>
    <property type="project" value="UniProtKB-UniRule"/>
</dbReference>
<dbReference type="GO" id="GO:0046872">
    <property type="term" value="F:metal ion binding"/>
    <property type="evidence" value="ECO:0007669"/>
    <property type="project" value="UniProtKB-KW"/>
</dbReference>
<dbReference type="GO" id="GO:0016730">
    <property type="term" value="F:oxidoreductase activity, acting on iron-sulfur proteins as donors"/>
    <property type="evidence" value="ECO:0007669"/>
    <property type="project" value="InterPro"/>
</dbReference>
<dbReference type="GO" id="GO:0016636">
    <property type="term" value="F:oxidoreductase activity, acting on the CH-CH group of donors, iron-sulfur protein as acceptor"/>
    <property type="evidence" value="ECO:0007669"/>
    <property type="project" value="UniProtKB-UniRule"/>
</dbReference>
<dbReference type="GO" id="GO:0036070">
    <property type="term" value="P:light-independent bacteriochlorophyll biosynthetic process"/>
    <property type="evidence" value="ECO:0007669"/>
    <property type="project" value="UniProtKB-UniRule"/>
</dbReference>
<dbReference type="GO" id="GO:0019685">
    <property type="term" value="P:photosynthesis, dark reaction"/>
    <property type="evidence" value="ECO:0007669"/>
    <property type="project" value="InterPro"/>
</dbReference>
<dbReference type="CDD" id="cd02032">
    <property type="entry name" value="Bchl-like"/>
    <property type="match status" value="1"/>
</dbReference>
<dbReference type="Gene3D" id="3.40.50.300">
    <property type="entry name" value="P-loop containing nucleotide triphosphate hydrolases"/>
    <property type="match status" value="1"/>
</dbReference>
<dbReference type="HAMAP" id="MF_00355">
    <property type="entry name" value="ChlL_BchL"/>
    <property type="match status" value="1"/>
</dbReference>
<dbReference type="InterPro" id="IPR030655">
    <property type="entry name" value="NifH/chlL_CS"/>
</dbReference>
<dbReference type="InterPro" id="IPR000392">
    <property type="entry name" value="NifH/frxC"/>
</dbReference>
<dbReference type="InterPro" id="IPR027417">
    <property type="entry name" value="P-loop_NTPase"/>
</dbReference>
<dbReference type="InterPro" id="IPR005971">
    <property type="entry name" value="Protochlorophyllide_ATP-bd"/>
</dbReference>
<dbReference type="NCBIfam" id="TIGR01281">
    <property type="entry name" value="DPOR_bchL"/>
    <property type="match status" value="1"/>
</dbReference>
<dbReference type="PANTHER" id="PTHR42864">
    <property type="entry name" value="LIGHT-INDEPENDENT PROTOCHLOROPHYLLIDE REDUCTASE IRON-SULFUR ATP-BINDING PROTEIN"/>
    <property type="match status" value="1"/>
</dbReference>
<dbReference type="PANTHER" id="PTHR42864:SF2">
    <property type="entry name" value="LIGHT-INDEPENDENT PROTOCHLOROPHYLLIDE REDUCTASE IRON-SULFUR ATP-BINDING PROTEIN"/>
    <property type="match status" value="1"/>
</dbReference>
<dbReference type="Pfam" id="PF00142">
    <property type="entry name" value="Fer4_NifH"/>
    <property type="match status" value="1"/>
</dbReference>
<dbReference type="PIRSF" id="PIRSF000363">
    <property type="entry name" value="Nitrogenase_iron"/>
    <property type="match status" value="1"/>
</dbReference>
<dbReference type="PRINTS" id="PR00091">
    <property type="entry name" value="NITROGNASEII"/>
</dbReference>
<dbReference type="SUPFAM" id="SSF52540">
    <property type="entry name" value="P-loop containing nucleoside triphosphate hydrolases"/>
    <property type="match status" value="1"/>
</dbReference>
<dbReference type="PROSITE" id="PS00746">
    <property type="entry name" value="NIFH_FRXC_1"/>
    <property type="match status" value="1"/>
</dbReference>
<dbReference type="PROSITE" id="PS00692">
    <property type="entry name" value="NIFH_FRXC_2"/>
    <property type="match status" value="1"/>
</dbReference>
<dbReference type="PROSITE" id="PS51026">
    <property type="entry name" value="NIFH_FRXC_3"/>
    <property type="match status" value="1"/>
</dbReference>
<comment type="function">
    <text evidence="1">Component of the dark-operative protochlorophyllide reductase (DPOR) that uses Mg-ATP and reduced ferredoxin to reduce ring D of protochlorophyllide (Pchlide) to form chlorophyllide a (Chlide). This reaction is light-independent. The L component serves as a unique electron donor to the NB-component of the complex, and binds Mg-ATP.</text>
</comment>
<comment type="catalytic activity">
    <reaction evidence="1">
        <text>chlorophyllide a + oxidized 2[4Fe-4S]-[ferredoxin] + 2 ADP + 2 phosphate = protochlorophyllide a + reduced 2[4Fe-4S]-[ferredoxin] + 2 ATP + 2 H2O</text>
        <dbReference type="Rhea" id="RHEA:28202"/>
        <dbReference type="Rhea" id="RHEA-COMP:10002"/>
        <dbReference type="Rhea" id="RHEA-COMP:10004"/>
        <dbReference type="ChEBI" id="CHEBI:15377"/>
        <dbReference type="ChEBI" id="CHEBI:30616"/>
        <dbReference type="ChEBI" id="CHEBI:33722"/>
        <dbReference type="ChEBI" id="CHEBI:33723"/>
        <dbReference type="ChEBI" id="CHEBI:43474"/>
        <dbReference type="ChEBI" id="CHEBI:83348"/>
        <dbReference type="ChEBI" id="CHEBI:83350"/>
        <dbReference type="ChEBI" id="CHEBI:456216"/>
        <dbReference type="EC" id="1.3.7.7"/>
    </reaction>
</comment>
<comment type="cofactor">
    <cofactor evidence="1">
        <name>[4Fe-4S] cluster</name>
        <dbReference type="ChEBI" id="CHEBI:49883"/>
    </cofactor>
    <text evidence="1">Binds 1 [4Fe-4S] cluster per dimer.</text>
</comment>
<comment type="pathway">
    <text evidence="1">Porphyrin-containing compound metabolism; bacteriochlorophyll biosynthesis (light-independent).</text>
</comment>
<comment type="subunit">
    <text evidence="1">Homodimer. Protochlorophyllide reductase is composed of three subunits; BchL, BchN and BchB.</text>
</comment>
<comment type="similarity">
    <text evidence="1">Belongs to the NifH/BchL/ChlL family.</text>
</comment>